<dbReference type="EMBL" id="CP001581">
    <property type="protein sequence ID" value="ACO84026.1"/>
    <property type="molecule type" value="Genomic_DNA"/>
</dbReference>
<dbReference type="RefSeq" id="WP_003357777.1">
    <property type="nucleotide sequence ID" value="NC_012563.1"/>
</dbReference>
<dbReference type="SMR" id="C1FVT4"/>
<dbReference type="GeneID" id="92939674"/>
<dbReference type="KEGG" id="cby:CLM_3348"/>
<dbReference type="eggNOG" id="COG0828">
    <property type="taxonomic scope" value="Bacteria"/>
</dbReference>
<dbReference type="HOGENOM" id="CLU_159258_1_2_9"/>
<dbReference type="Proteomes" id="UP000001374">
    <property type="component" value="Chromosome"/>
</dbReference>
<dbReference type="GO" id="GO:1990904">
    <property type="term" value="C:ribonucleoprotein complex"/>
    <property type="evidence" value="ECO:0007669"/>
    <property type="project" value="UniProtKB-KW"/>
</dbReference>
<dbReference type="GO" id="GO:0005840">
    <property type="term" value="C:ribosome"/>
    <property type="evidence" value="ECO:0007669"/>
    <property type="project" value="UniProtKB-KW"/>
</dbReference>
<dbReference type="GO" id="GO:0003735">
    <property type="term" value="F:structural constituent of ribosome"/>
    <property type="evidence" value="ECO:0007669"/>
    <property type="project" value="InterPro"/>
</dbReference>
<dbReference type="GO" id="GO:0006412">
    <property type="term" value="P:translation"/>
    <property type="evidence" value="ECO:0007669"/>
    <property type="project" value="UniProtKB-UniRule"/>
</dbReference>
<dbReference type="Gene3D" id="1.20.5.1150">
    <property type="entry name" value="Ribosomal protein S8"/>
    <property type="match status" value="1"/>
</dbReference>
<dbReference type="HAMAP" id="MF_00358">
    <property type="entry name" value="Ribosomal_bS21"/>
    <property type="match status" value="1"/>
</dbReference>
<dbReference type="InterPro" id="IPR001911">
    <property type="entry name" value="Ribosomal_bS21"/>
</dbReference>
<dbReference type="InterPro" id="IPR018278">
    <property type="entry name" value="Ribosomal_bS21_CS"/>
</dbReference>
<dbReference type="InterPro" id="IPR038380">
    <property type="entry name" value="Ribosomal_bS21_sf"/>
</dbReference>
<dbReference type="NCBIfam" id="TIGR00030">
    <property type="entry name" value="S21p"/>
    <property type="match status" value="1"/>
</dbReference>
<dbReference type="PANTHER" id="PTHR21109">
    <property type="entry name" value="MITOCHONDRIAL 28S RIBOSOMAL PROTEIN S21"/>
    <property type="match status" value="1"/>
</dbReference>
<dbReference type="PANTHER" id="PTHR21109:SF22">
    <property type="entry name" value="SMALL RIBOSOMAL SUBUNIT PROTEIN BS21"/>
    <property type="match status" value="1"/>
</dbReference>
<dbReference type="Pfam" id="PF01165">
    <property type="entry name" value="Ribosomal_S21"/>
    <property type="match status" value="1"/>
</dbReference>
<dbReference type="PRINTS" id="PR00976">
    <property type="entry name" value="RIBOSOMALS21"/>
</dbReference>
<dbReference type="PROSITE" id="PS01181">
    <property type="entry name" value="RIBOSOMAL_S21"/>
    <property type="match status" value="1"/>
</dbReference>
<organism>
    <name type="scientific">Clostridium botulinum (strain Kyoto / Type A2)</name>
    <dbReference type="NCBI Taxonomy" id="536232"/>
    <lineage>
        <taxon>Bacteria</taxon>
        <taxon>Bacillati</taxon>
        <taxon>Bacillota</taxon>
        <taxon>Clostridia</taxon>
        <taxon>Eubacteriales</taxon>
        <taxon>Clostridiaceae</taxon>
        <taxon>Clostridium</taxon>
    </lineage>
</organism>
<name>RS21_CLOBJ</name>
<feature type="chain" id="PRO_1000194285" description="Small ribosomal subunit protein bS21">
    <location>
        <begin position="1"/>
        <end position="58"/>
    </location>
</feature>
<feature type="region of interest" description="Disordered" evidence="2">
    <location>
        <begin position="32"/>
        <end position="58"/>
    </location>
</feature>
<feature type="compositionally biased region" description="Basic and acidic residues" evidence="2">
    <location>
        <begin position="32"/>
        <end position="42"/>
    </location>
</feature>
<feature type="compositionally biased region" description="Basic residues" evidence="2">
    <location>
        <begin position="43"/>
        <end position="58"/>
    </location>
</feature>
<comment type="similarity">
    <text evidence="1">Belongs to the bacterial ribosomal protein bS21 family.</text>
</comment>
<gene>
    <name evidence="1" type="primary">rpsU</name>
    <name type="ordered locus">CLM_3348</name>
</gene>
<accession>C1FVT4</accession>
<keyword id="KW-0687">Ribonucleoprotein</keyword>
<keyword id="KW-0689">Ribosomal protein</keyword>
<reference key="1">
    <citation type="submission" date="2008-10" db="EMBL/GenBank/DDBJ databases">
        <title>Genome sequence of Clostridium botulinum A2 Kyoto.</title>
        <authorList>
            <person name="Shrivastava S."/>
            <person name="Brinkac L.M."/>
            <person name="Brown J.L."/>
            <person name="Bruce D."/>
            <person name="Detter C.C."/>
            <person name="Johnson E.A."/>
            <person name="Munk C.A."/>
            <person name="Smith L.A."/>
            <person name="Smith T.J."/>
            <person name="Sutton G."/>
            <person name="Brettin T.S."/>
        </authorList>
    </citation>
    <scope>NUCLEOTIDE SEQUENCE [LARGE SCALE GENOMIC DNA]</scope>
    <source>
        <strain>Kyoto / Type A2</strain>
    </source>
</reference>
<proteinExistence type="inferred from homology"/>
<protein>
    <recommendedName>
        <fullName evidence="1">Small ribosomal subunit protein bS21</fullName>
    </recommendedName>
    <alternativeName>
        <fullName evidence="3">30S ribosomal protein S21</fullName>
    </alternativeName>
</protein>
<evidence type="ECO:0000255" key="1">
    <source>
        <dbReference type="HAMAP-Rule" id="MF_00358"/>
    </source>
</evidence>
<evidence type="ECO:0000256" key="2">
    <source>
        <dbReference type="SAM" id="MobiDB-lite"/>
    </source>
</evidence>
<evidence type="ECO:0000305" key="3"/>
<sequence>MSEIKVGENESLENALRRFKKKCARAGVLSEVRKREHYEKPSVKKKKKSEAARKRKFK</sequence>